<gene>
    <name type="ordered locus">MIMI_R450</name>
</gene>
<accession>Q5UQQ2</accession>
<sequence length="355" mass="40908">MNKKIEKNNNVINKPNKYESNTTDNQLIMKKNANSGSKKSRSTKVEVETNLPKRRGRRPKKILDSFESTTNVLNTSTEQNNSAVILRLPKIDPSKLSGLKNKQGRKVFEVPETTEPGDNYSDNELSEGMFRNDIPKDDVCHKCIKYEKEITHLKNEVMKLKNCDKTDKTSKIHNTSVTFISLGSGKKMSLKKTNLRCLWDCHKFDNIPCYLPELYNNGKYYVIASVFCSFNCALAHNLYYIKDSKIDIRKSLVFRLYRELYGLTPDEPIELKEAPPKELLEDFGGKVNIIDYRRSFIKLNKEFIVYMPPLKPIGVQIVEHDTDTDGNDTDRDYVLKRNKPLMKGRGIVSMMGFNK</sequence>
<name>YR450_MIMIV</name>
<keyword id="KW-1185">Reference proteome</keyword>
<proteinExistence type="predicted"/>
<organism>
    <name type="scientific">Acanthamoeba polyphaga mimivirus</name>
    <name type="common">APMV</name>
    <dbReference type="NCBI Taxonomy" id="212035"/>
    <lineage>
        <taxon>Viruses</taxon>
        <taxon>Varidnaviria</taxon>
        <taxon>Bamfordvirae</taxon>
        <taxon>Nucleocytoviricota</taxon>
        <taxon>Megaviricetes</taxon>
        <taxon>Imitervirales</taxon>
        <taxon>Mimiviridae</taxon>
        <taxon>Megamimivirinae</taxon>
        <taxon>Mimivirus</taxon>
        <taxon>Mimivirus bradfordmassiliense</taxon>
    </lineage>
</organism>
<feature type="chain" id="PRO_0000247388" description="Uncharacterized protein R450">
    <location>
        <begin position="1"/>
        <end position="355"/>
    </location>
</feature>
<feature type="region of interest" description="Disordered" evidence="1">
    <location>
        <begin position="1"/>
        <end position="61"/>
    </location>
</feature>
<feature type="compositionally biased region" description="Polar residues" evidence="1">
    <location>
        <begin position="18"/>
        <end position="37"/>
    </location>
</feature>
<dbReference type="EMBL" id="AY653733">
    <property type="protein sequence ID" value="AAV50716.1"/>
    <property type="molecule type" value="Genomic_DNA"/>
</dbReference>
<dbReference type="SMR" id="Q5UQQ2"/>
<dbReference type="KEGG" id="vg:9925075"/>
<dbReference type="OrthoDB" id="17098at10239"/>
<dbReference type="Proteomes" id="UP000001134">
    <property type="component" value="Genome"/>
</dbReference>
<reference key="1">
    <citation type="journal article" date="2004" name="Science">
        <title>The 1.2-megabase genome sequence of Mimivirus.</title>
        <authorList>
            <person name="Raoult D."/>
            <person name="Audic S."/>
            <person name="Robert C."/>
            <person name="Abergel C."/>
            <person name="Renesto P."/>
            <person name="Ogata H."/>
            <person name="La Scola B."/>
            <person name="Susan M."/>
            <person name="Claverie J.-M."/>
        </authorList>
    </citation>
    <scope>NUCLEOTIDE SEQUENCE [LARGE SCALE GENOMIC DNA]</scope>
    <source>
        <strain>Rowbotham-Bradford</strain>
    </source>
</reference>
<organismHost>
    <name type="scientific">Acanthamoeba polyphaga</name>
    <name type="common">Amoeba</name>
    <dbReference type="NCBI Taxonomy" id="5757"/>
</organismHost>
<protein>
    <recommendedName>
        <fullName>Uncharacterized protein R450</fullName>
    </recommendedName>
</protein>
<evidence type="ECO:0000256" key="1">
    <source>
        <dbReference type="SAM" id="MobiDB-lite"/>
    </source>
</evidence>